<name>RIMK_ALIFM</name>
<protein>
    <recommendedName>
        <fullName evidence="1">Probable alpha-L-glutamate ligase</fullName>
        <ecNumber evidence="1">6.3.2.-</ecNumber>
    </recommendedName>
</protein>
<feature type="chain" id="PRO_1000146953" description="Probable alpha-L-glutamate ligase">
    <location>
        <begin position="1"/>
        <end position="301"/>
    </location>
</feature>
<feature type="domain" description="ATP-grasp" evidence="1">
    <location>
        <begin position="104"/>
        <end position="287"/>
    </location>
</feature>
<feature type="binding site" evidence="1">
    <location>
        <position position="141"/>
    </location>
    <ligand>
        <name>ATP</name>
        <dbReference type="ChEBI" id="CHEBI:30616"/>
    </ligand>
</feature>
<feature type="binding site" evidence="1">
    <location>
        <begin position="178"/>
        <end position="179"/>
    </location>
    <ligand>
        <name>ATP</name>
        <dbReference type="ChEBI" id="CHEBI:30616"/>
    </ligand>
</feature>
<feature type="binding site" evidence="1">
    <location>
        <position position="187"/>
    </location>
    <ligand>
        <name>ATP</name>
        <dbReference type="ChEBI" id="CHEBI:30616"/>
    </ligand>
</feature>
<feature type="binding site" evidence="1">
    <location>
        <begin position="211"/>
        <end position="213"/>
    </location>
    <ligand>
        <name>ATP</name>
        <dbReference type="ChEBI" id="CHEBI:30616"/>
    </ligand>
</feature>
<feature type="binding site" evidence="1">
    <location>
        <position position="248"/>
    </location>
    <ligand>
        <name>Mg(2+)</name>
        <dbReference type="ChEBI" id="CHEBI:18420"/>
        <label>1</label>
    </ligand>
</feature>
<feature type="binding site" evidence="1">
    <location>
        <position position="248"/>
    </location>
    <ligand>
        <name>Mn(2+)</name>
        <dbReference type="ChEBI" id="CHEBI:29035"/>
        <label>1</label>
    </ligand>
</feature>
<feature type="binding site" evidence="1">
    <location>
        <position position="260"/>
    </location>
    <ligand>
        <name>Mg(2+)</name>
        <dbReference type="ChEBI" id="CHEBI:18420"/>
        <label>1</label>
    </ligand>
</feature>
<feature type="binding site" evidence="1">
    <location>
        <position position="260"/>
    </location>
    <ligand>
        <name>Mg(2+)</name>
        <dbReference type="ChEBI" id="CHEBI:18420"/>
        <label>2</label>
    </ligand>
</feature>
<feature type="binding site" evidence="1">
    <location>
        <position position="260"/>
    </location>
    <ligand>
        <name>Mn(2+)</name>
        <dbReference type="ChEBI" id="CHEBI:29035"/>
        <label>1</label>
    </ligand>
</feature>
<feature type="binding site" evidence="1">
    <location>
        <position position="260"/>
    </location>
    <ligand>
        <name>Mn(2+)</name>
        <dbReference type="ChEBI" id="CHEBI:29035"/>
        <label>2</label>
    </ligand>
</feature>
<feature type="binding site" evidence="1">
    <location>
        <position position="262"/>
    </location>
    <ligand>
        <name>Mg(2+)</name>
        <dbReference type="ChEBI" id="CHEBI:18420"/>
        <label>2</label>
    </ligand>
</feature>
<feature type="binding site" evidence="1">
    <location>
        <position position="262"/>
    </location>
    <ligand>
        <name>Mn(2+)</name>
        <dbReference type="ChEBI" id="CHEBI:29035"/>
        <label>2</label>
    </ligand>
</feature>
<evidence type="ECO:0000255" key="1">
    <source>
        <dbReference type="HAMAP-Rule" id="MF_01552"/>
    </source>
</evidence>
<reference key="1">
    <citation type="submission" date="2008-08" db="EMBL/GenBank/DDBJ databases">
        <title>Complete sequence of Vibrio fischeri strain MJ11.</title>
        <authorList>
            <person name="Mandel M.J."/>
            <person name="Stabb E.V."/>
            <person name="Ruby E.G."/>
            <person name="Ferriera S."/>
            <person name="Johnson J."/>
            <person name="Kravitz S."/>
            <person name="Beeson K."/>
            <person name="Sutton G."/>
            <person name="Rogers Y.-H."/>
            <person name="Friedman R."/>
            <person name="Frazier M."/>
            <person name="Venter J.C."/>
        </authorList>
    </citation>
    <scope>NUCLEOTIDE SEQUENCE [LARGE SCALE GENOMIC DNA]</scope>
    <source>
        <strain>MJ11</strain>
    </source>
</reference>
<gene>
    <name evidence="1" type="primary">rimK</name>
    <name type="ordered locus">VFMJ11_0676</name>
</gene>
<comment type="cofactor">
    <cofactor evidence="1">
        <name>Mg(2+)</name>
        <dbReference type="ChEBI" id="CHEBI:18420"/>
    </cofactor>
    <cofactor evidence="1">
        <name>Mn(2+)</name>
        <dbReference type="ChEBI" id="CHEBI:29035"/>
    </cofactor>
    <text evidence="1">Binds 2 magnesium or manganese ions per subunit.</text>
</comment>
<comment type="similarity">
    <text evidence="1">Belongs to the RimK family.</text>
</comment>
<accession>B5FBB1</accession>
<proteinExistence type="inferred from homology"/>
<sequence>MKIGILSRNQSLYSTSRLIEAAESRGHEVKVIDALRCYMNINSEKPQIHFKGEELVDYDAIIPRIGASVTFYGTAVLRQFEMMGVYPVNESVAITRSRDKLRSMQLLSRKGIGMPITGFASKPDDVKDLLDMVGGAPVVIKLLEGTQGIGVVLAETRKAAESVVEAFMGLKANIMVQEFIKEAGGADIRCFVIGGKVIAAMKRQGAEGEFRSNLHRGGSASLVKLTPEERKTAVAAANIMGLNVAGVDLLRSERGPLVMEVNSSPGLEGIEKATGKDVAGLIIDFIEKTAATKRTKTRGKG</sequence>
<dbReference type="EC" id="6.3.2.-" evidence="1"/>
<dbReference type="EMBL" id="CP001139">
    <property type="protein sequence ID" value="ACH66138.1"/>
    <property type="molecule type" value="Genomic_DNA"/>
</dbReference>
<dbReference type="RefSeq" id="WP_012533521.1">
    <property type="nucleotide sequence ID" value="NC_011184.1"/>
</dbReference>
<dbReference type="SMR" id="B5FBB1"/>
<dbReference type="GeneID" id="56276628"/>
<dbReference type="KEGG" id="vfm:VFMJ11_0676"/>
<dbReference type="HOGENOM" id="CLU_054353_0_1_6"/>
<dbReference type="Proteomes" id="UP000001857">
    <property type="component" value="Chromosome I"/>
</dbReference>
<dbReference type="GO" id="GO:0005737">
    <property type="term" value="C:cytoplasm"/>
    <property type="evidence" value="ECO:0007669"/>
    <property type="project" value="TreeGrafter"/>
</dbReference>
<dbReference type="GO" id="GO:0005524">
    <property type="term" value="F:ATP binding"/>
    <property type="evidence" value="ECO:0007669"/>
    <property type="project" value="UniProtKB-UniRule"/>
</dbReference>
<dbReference type="GO" id="GO:0046872">
    <property type="term" value="F:metal ion binding"/>
    <property type="evidence" value="ECO:0007669"/>
    <property type="project" value="UniProtKB-KW"/>
</dbReference>
<dbReference type="GO" id="GO:0018169">
    <property type="term" value="F:ribosomal S6-glutamic acid ligase activity"/>
    <property type="evidence" value="ECO:0007669"/>
    <property type="project" value="TreeGrafter"/>
</dbReference>
<dbReference type="GO" id="GO:0036211">
    <property type="term" value="P:protein modification process"/>
    <property type="evidence" value="ECO:0007669"/>
    <property type="project" value="InterPro"/>
</dbReference>
<dbReference type="GO" id="GO:0009432">
    <property type="term" value="P:SOS response"/>
    <property type="evidence" value="ECO:0007669"/>
    <property type="project" value="TreeGrafter"/>
</dbReference>
<dbReference type="GO" id="GO:0006412">
    <property type="term" value="P:translation"/>
    <property type="evidence" value="ECO:0007669"/>
    <property type="project" value="UniProtKB-KW"/>
</dbReference>
<dbReference type="FunFam" id="3.40.50.20:FF:000004">
    <property type="entry name" value="Probable alpha-L-glutamate ligase"/>
    <property type="match status" value="1"/>
</dbReference>
<dbReference type="FunFam" id="3.30.1490.20:FF:000005">
    <property type="entry name" value="Probable alpha-L-glutamate ligase 1"/>
    <property type="match status" value="1"/>
</dbReference>
<dbReference type="FunFam" id="3.30.470.20:FF:000016">
    <property type="entry name" value="Ribosomal protein S6--L-glutamate ligase"/>
    <property type="match status" value="1"/>
</dbReference>
<dbReference type="Gene3D" id="3.40.50.20">
    <property type="match status" value="1"/>
</dbReference>
<dbReference type="Gene3D" id="3.30.1490.20">
    <property type="entry name" value="ATP-grasp fold, A domain"/>
    <property type="match status" value="1"/>
</dbReference>
<dbReference type="Gene3D" id="3.30.470.20">
    <property type="entry name" value="ATP-grasp fold, B domain"/>
    <property type="match status" value="1"/>
</dbReference>
<dbReference type="HAMAP" id="MF_01552">
    <property type="entry name" value="RimK"/>
    <property type="match status" value="1"/>
</dbReference>
<dbReference type="InterPro" id="IPR011761">
    <property type="entry name" value="ATP-grasp"/>
</dbReference>
<dbReference type="InterPro" id="IPR013651">
    <property type="entry name" value="ATP-grasp_RimK-type"/>
</dbReference>
<dbReference type="InterPro" id="IPR013815">
    <property type="entry name" value="ATP_grasp_subdomain_1"/>
</dbReference>
<dbReference type="InterPro" id="IPR023533">
    <property type="entry name" value="RimK"/>
</dbReference>
<dbReference type="InterPro" id="IPR041107">
    <property type="entry name" value="Rimk_N"/>
</dbReference>
<dbReference type="InterPro" id="IPR004666">
    <property type="entry name" value="Rp_bS6_RimK/Lys_biosynth_LsyX"/>
</dbReference>
<dbReference type="NCBIfam" id="NF007764">
    <property type="entry name" value="PRK10446.1"/>
    <property type="match status" value="1"/>
</dbReference>
<dbReference type="NCBIfam" id="TIGR00768">
    <property type="entry name" value="rimK_fam"/>
    <property type="match status" value="1"/>
</dbReference>
<dbReference type="PANTHER" id="PTHR21621:SF7">
    <property type="entry name" value="RIBOSOMAL PROTEIN BS6--L-GLUTAMATE LIGASE"/>
    <property type="match status" value="1"/>
</dbReference>
<dbReference type="PANTHER" id="PTHR21621">
    <property type="entry name" value="RIBOSOMAL PROTEIN S6 MODIFICATION PROTEIN"/>
    <property type="match status" value="1"/>
</dbReference>
<dbReference type="Pfam" id="PF08443">
    <property type="entry name" value="RimK"/>
    <property type="match status" value="1"/>
</dbReference>
<dbReference type="Pfam" id="PF18030">
    <property type="entry name" value="Rimk_N"/>
    <property type="match status" value="1"/>
</dbReference>
<dbReference type="SUPFAM" id="SSF56059">
    <property type="entry name" value="Glutathione synthetase ATP-binding domain-like"/>
    <property type="match status" value="1"/>
</dbReference>
<dbReference type="PROSITE" id="PS50975">
    <property type="entry name" value="ATP_GRASP"/>
    <property type="match status" value="1"/>
</dbReference>
<keyword id="KW-0067">ATP-binding</keyword>
<keyword id="KW-0436">Ligase</keyword>
<keyword id="KW-0460">Magnesium</keyword>
<keyword id="KW-0464">Manganese</keyword>
<keyword id="KW-0479">Metal-binding</keyword>
<keyword id="KW-0547">Nucleotide-binding</keyword>
<keyword id="KW-0648">Protein biosynthesis</keyword>
<organism>
    <name type="scientific">Aliivibrio fischeri (strain MJ11)</name>
    <name type="common">Vibrio fischeri</name>
    <dbReference type="NCBI Taxonomy" id="388396"/>
    <lineage>
        <taxon>Bacteria</taxon>
        <taxon>Pseudomonadati</taxon>
        <taxon>Pseudomonadota</taxon>
        <taxon>Gammaproteobacteria</taxon>
        <taxon>Vibrionales</taxon>
        <taxon>Vibrionaceae</taxon>
        <taxon>Aliivibrio</taxon>
    </lineage>
</organism>